<feature type="chain" id="PRO_1000190070" description="GTP cyclohydrolase 1">
    <location>
        <begin position="1"/>
        <end position="189"/>
    </location>
</feature>
<feature type="binding site" evidence="1">
    <location>
        <position position="78"/>
    </location>
    <ligand>
        <name>Zn(2+)</name>
        <dbReference type="ChEBI" id="CHEBI:29105"/>
    </ligand>
</feature>
<feature type="binding site" evidence="1">
    <location>
        <position position="81"/>
    </location>
    <ligand>
        <name>Zn(2+)</name>
        <dbReference type="ChEBI" id="CHEBI:29105"/>
    </ligand>
</feature>
<feature type="binding site" evidence="1">
    <location>
        <position position="150"/>
    </location>
    <ligand>
        <name>Zn(2+)</name>
        <dbReference type="ChEBI" id="CHEBI:29105"/>
    </ligand>
</feature>
<protein>
    <recommendedName>
        <fullName evidence="1">GTP cyclohydrolase 1</fullName>
        <ecNumber evidence="1">3.5.4.16</ecNumber>
    </recommendedName>
    <alternativeName>
        <fullName evidence="1">GTP cyclohydrolase I</fullName>
        <shortName evidence="1">GTP-CH-I</shortName>
    </alternativeName>
</protein>
<organism>
    <name type="scientific">Bacillus cereus (strain B4264)</name>
    <dbReference type="NCBI Taxonomy" id="405532"/>
    <lineage>
        <taxon>Bacteria</taxon>
        <taxon>Bacillati</taxon>
        <taxon>Bacillota</taxon>
        <taxon>Bacilli</taxon>
        <taxon>Bacillales</taxon>
        <taxon>Bacillaceae</taxon>
        <taxon>Bacillus</taxon>
        <taxon>Bacillus cereus group</taxon>
    </lineage>
</organism>
<sequence length="189" mass="21020">MAKVNLEQIEHAVRLILEAIGDDPNREGVLDTPKRVAKMYAEVFSGMHEDPKEHLHKVFGEDHEELVLVKDIPFYSMCEHHLVPFYGVAHVAYIPQGGKVTGLSKLARTVDTIARRPQLQERITSTVANSIMEVLEPHGVMVVVEAEHMCMTMRGVKKPGAKTVTTAVRGVLENDAAARSEILSFIKTK</sequence>
<gene>
    <name evidence="1" type="primary">folE</name>
    <name type="ordered locus">BCB4264_A1567</name>
</gene>
<dbReference type="EC" id="3.5.4.16" evidence="1"/>
<dbReference type="EMBL" id="CP001176">
    <property type="protein sequence ID" value="ACK63833.1"/>
    <property type="molecule type" value="Genomic_DNA"/>
</dbReference>
<dbReference type="RefSeq" id="WP_001151482.1">
    <property type="nucleotide sequence ID" value="NZ_VEHB01000003.1"/>
</dbReference>
<dbReference type="SMR" id="B7HHR5"/>
<dbReference type="GeneID" id="93009529"/>
<dbReference type="KEGG" id="bcb:BCB4264_A1567"/>
<dbReference type="HOGENOM" id="CLU_049768_3_3_9"/>
<dbReference type="UniPathway" id="UPA00848">
    <property type="reaction ID" value="UER00151"/>
</dbReference>
<dbReference type="Proteomes" id="UP000007096">
    <property type="component" value="Chromosome"/>
</dbReference>
<dbReference type="GO" id="GO:0005737">
    <property type="term" value="C:cytoplasm"/>
    <property type="evidence" value="ECO:0007669"/>
    <property type="project" value="TreeGrafter"/>
</dbReference>
<dbReference type="GO" id="GO:0005525">
    <property type="term" value="F:GTP binding"/>
    <property type="evidence" value="ECO:0007669"/>
    <property type="project" value="TreeGrafter"/>
</dbReference>
<dbReference type="GO" id="GO:0003934">
    <property type="term" value="F:GTP cyclohydrolase I activity"/>
    <property type="evidence" value="ECO:0007669"/>
    <property type="project" value="UniProtKB-UniRule"/>
</dbReference>
<dbReference type="GO" id="GO:0008270">
    <property type="term" value="F:zinc ion binding"/>
    <property type="evidence" value="ECO:0007669"/>
    <property type="project" value="UniProtKB-UniRule"/>
</dbReference>
<dbReference type="GO" id="GO:0006730">
    <property type="term" value="P:one-carbon metabolic process"/>
    <property type="evidence" value="ECO:0007669"/>
    <property type="project" value="UniProtKB-UniRule"/>
</dbReference>
<dbReference type="GO" id="GO:0006729">
    <property type="term" value="P:tetrahydrobiopterin biosynthetic process"/>
    <property type="evidence" value="ECO:0007669"/>
    <property type="project" value="TreeGrafter"/>
</dbReference>
<dbReference type="GO" id="GO:0046654">
    <property type="term" value="P:tetrahydrofolate biosynthetic process"/>
    <property type="evidence" value="ECO:0007669"/>
    <property type="project" value="UniProtKB-UniRule"/>
</dbReference>
<dbReference type="CDD" id="cd00642">
    <property type="entry name" value="GTP_cyclohydro1"/>
    <property type="match status" value="1"/>
</dbReference>
<dbReference type="FunFam" id="1.10.286.10:FF:000001">
    <property type="entry name" value="GTP cyclohydrolase 1"/>
    <property type="match status" value="1"/>
</dbReference>
<dbReference type="FunFam" id="3.30.1130.10:FF:000001">
    <property type="entry name" value="GTP cyclohydrolase 1"/>
    <property type="match status" value="1"/>
</dbReference>
<dbReference type="Gene3D" id="1.10.286.10">
    <property type="match status" value="1"/>
</dbReference>
<dbReference type="Gene3D" id="3.30.1130.10">
    <property type="match status" value="1"/>
</dbReference>
<dbReference type="HAMAP" id="MF_00223">
    <property type="entry name" value="FolE"/>
    <property type="match status" value="1"/>
</dbReference>
<dbReference type="InterPro" id="IPR043133">
    <property type="entry name" value="GTP-CH-I_C/QueF"/>
</dbReference>
<dbReference type="InterPro" id="IPR043134">
    <property type="entry name" value="GTP-CH-I_N"/>
</dbReference>
<dbReference type="InterPro" id="IPR001474">
    <property type="entry name" value="GTP_CycHdrlase_I"/>
</dbReference>
<dbReference type="InterPro" id="IPR018234">
    <property type="entry name" value="GTP_CycHdrlase_I_CS"/>
</dbReference>
<dbReference type="InterPro" id="IPR020602">
    <property type="entry name" value="GTP_CycHdrlase_I_dom"/>
</dbReference>
<dbReference type="NCBIfam" id="TIGR00063">
    <property type="entry name" value="folE"/>
    <property type="match status" value="1"/>
</dbReference>
<dbReference type="NCBIfam" id="NF006825">
    <property type="entry name" value="PRK09347.1-2"/>
    <property type="match status" value="1"/>
</dbReference>
<dbReference type="NCBIfam" id="NF006826">
    <property type="entry name" value="PRK09347.1-3"/>
    <property type="match status" value="1"/>
</dbReference>
<dbReference type="PANTHER" id="PTHR11109:SF7">
    <property type="entry name" value="GTP CYCLOHYDROLASE 1"/>
    <property type="match status" value="1"/>
</dbReference>
<dbReference type="PANTHER" id="PTHR11109">
    <property type="entry name" value="GTP CYCLOHYDROLASE I"/>
    <property type="match status" value="1"/>
</dbReference>
<dbReference type="Pfam" id="PF01227">
    <property type="entry name" value="GTP_cyclohydroI"/>
    <property type="match status" value="1"/>
</dbReference>
<dbReference type="SUPFAM" id="SSF55620">
    <property type="entry name" value="Tetrahydrobiopterin biosynthesis enzymes-like"/>
    <property type="match status" value="1"/>
</dbReference>
<dbReference type="PROSITE" id="PS00859">
    <property type="entry name" value="GTP_CYCLOHYDROL_1_1"/>
    <property type="match status" value="1"/>
</dbReference>
<dbReference type="PROSITE" id="PS00860">
    <property type="entry name" value="GTP_CYCLOHYDROL_1_2"/>
    <property type="match status" value="1"/>
</dbReference>
<reference key="1">
    <citation type="submission" date="2008-10" db="EMBL/GenBank/DDBJ databases">
        <title>Genome sequence of Bacillus cereus B4264.</title>
        <authorList>
            <person name="Dodson R.J."/>
            <person name="Durkin A.S."/>
            <person name="Rosovitz M.J."/>
            <person name="Rasko D.A."/>
            <person name="Hoffmaster A."/>
            <person name="Ravel J."/>
            <person name="Sutton G."/>
        </authorList>
    </citation>
    <scope>NUCLEOTIDE SEQUENCE [LARGE SCALE GENOMIC DNA]</scope>
    <source>
        <strain>B4264</strain>
    </source>
</reference>
<accession>B7HHR5</accession>
<proteinExistence type="inferred from homology"/>
<comment type="catalytic activity">
    <reaction evidence="1">
        <text>GTP + H2O = 7,8-dihydroneopterin 3'-triphosphate + formate + H(+)</text>
        <dbReference type="Rhea" id="RHEA:17473"/>
        <dbReference type="ChEBI" id="CHEBI:15377"/>
        <dbReference type="ChEBI" id="CHEBI:15378"/>
        <dbReference type="ChEBI" id="CHEBI:15740"/>
        <dbReference type="ChEBI" id="CHEBI:37565"/>
        <dbReference type="ChEBI" id="CHEBI:58462"/>
        <dbReference type="EC" id="3.5.4.16"/>
    </reaction>
</comment>
<comment type="pathway">
    <text evidence="1">Cofactor biosynthesis; 7,8-dihydroneopterin triphosphate biosynthesis; 7,8-dihydroneopterin triphosphate from GTP: step 1/1.</text>
</comment>
<comment type="subunit">
    <text evidence="1">Homomer.</text>
</comment>
<comment type="similarity">
    <text evidence="1">Belongs to the GTP cyclohydrolase I family.</text>
</comment>
<name>GCH1_BACC4</name>
<evidence type="ECO:0000255" key="1">
    <source>
        <dbReference type="HAMAP-Rule" id="MF_00223"/>
    </source>
</evidence>
<keyword id="KW-0378">Hydrolase</keyword>
<keyword id="KW-0479">Metal-binding</keyword>
<keyword id="KW-0554">One-carbon metabolism</keyword>
<keyword id="KW-0862">Zinc</keyword>